<protein>
    <recommendedName>
        <fullName evidence="1">4-hydroxy-2-oxovalerate aldolase 1</fullName>
        <shortName evidence="1">HOA 1</shortName>
        <ecNumber evidence="1">4.1.3.39</ecNumber>
    </recommendedName>
    <alternativeName>
        <fullName evidence="1">4-hydroxy-2-keto-pentanoic acid aldolase 1</fullName>
    </alternativeName>
    <alternativeName>
        <fullName evidence="1">4-hydroxy-2-oxopentanoate aldolase 1</fullName>
    </alternativeName>
</protein>
<gene>
    <name type="ordered locus">Mmcs_4659</name>
</gene>
<dbReference type="EC" id="4.1.3.39" evidence="1"/>
<dbReference type="EMBL" id="CP000384">
    <property type="protein sequence ID" value="ABG10763.1"/>
    <property type="molecule type" value="Genomic_DNA"/>
</dbReference>
<dbReference type="SMR" id="Q1B2X1"/>
<dbReference type="KEGG" id="mmc:Mmcs_4659"/>
<dbReference type="HOGENOM" id="CLU_049173_0_0_11"/>
<dbReference type="BioCyc" id="MSP164756:G1G6O-4762-MONOMER"/>
<dbReference type="GO" id="GO:0003852">
    <property type="term" value="F:2-isopropylmalate synthase activity"/>
    <property type="evidence" value="ECO:0007669"/>
    <property type="project" value="TreeGrafter"/>
</dbReference>
<dbReference type="GO" id="GO:0008701">
    <property type="term" value="F:4-hydroxy-2-oxovalerate aldolase activity"/>
    <property type="evidence" value="ECO:0007669"/>
    <property type="project" value="UniProtKB-UniRule"/>
</dbReference>
<dbReference type="GO" id="GO:0030145">
    <property type="term" value="F:manganese ion binding"/>
    <property type="evidence" value="ECO:0007669"/>
    <property type="project" value="UniProtKB-UniRule"/>
</dbReference>
<dbReference type="GO" id="GO:0009056">
    <property type="term" value="P:catabolic process"/>
    <property type="evidence" value="ECO:0007669"/>
    <property type="project" value="UniProtKB-KW"/>
</dbReference>
<dbReference type="GO" id="GO:0009098">
    <property type="term" value="P:L-leucine biosynthetic process"/>
    <property type="evidence" value="ECO:0007669"/>
    <property type="project" value="TreeGrafter"/>
</dbReference>
<dbReference type="CDD" id="cd07943">
    <property type="entry name" value="DRE_TIM_HOA"/>
    <property type="match status" value="1"/>
</dbReference>
<dbReference type="FunFam" id="3.20.20.70:FF:000072">
    <property type="entry name" value="4-hydroxy-2-oxovalerate aldolase"/>
    <property type="match status" value="1"/>
</dbReference>
<dbReference type="Gene3D" id="1.10.8.60">
    <property type="match status" value="1"/>
</dbReference>
<dbReference type="Gene3D" id="3.20.20.70">
    <property type="entry name" value="Aldolase class I"/>
    <property type="match status" value="1"/>
</dbReference>
<dbReference type="HAMAP" id="MF_01656">
    <property type="entry name" value="HOA"/>
    <property type="match status" value="1"/>
</dbReference>
<dbReference type="InterPro" id="IPR050073">
    <property type="entry name" value="2-IPM_HCS-like"/>
</dbReference>
<dbReference type="InterPro" id="IPR017629">
    <property type="entry name" value="4OH_2_O-val_aldolase"/>
</dbReference>
<dbReference type="InterPro" id="IPR013785">
    <property type="entry name" value="Aldolase_TIM"/>
</dbReference>
<dbReference type="InterPro" id="IPR012425">
    <property type="entry name" value="DmpG_comm"/>
</dbReference>
<dbReference type="InterPro" id="IPR035685">
    <property type="entry name" value="DRE_TIM_HOA"/>
</dbReference>
<dbReference type="InterPro" id="IPR000891">
    <property type="entry name" value="PYR_CT"/>
</dbReference>
<dbReference type="NCBIfam" id="TIGR03217">
    <property type="entry name" value="4OH_2_O_val_ald"/>
    <property type="match status" value="1"/>
</dbReference>
<dbReference type="NCBIfam" id="NF006049">
    <property type="entry name" value="PRK08195.1"/>
    <property type="match status" value="1"/>
</dbReference>
<dbReference type="PANTHER" id="PTHR10277:SF9">
    <property type="entry name" value="2-ISOPROPYLMALATE SYNTHASE 1, CHLOROPLASTIC-RELATED"/>
    <property type="match status" value="1"/>
</dbReference>
<dbReference type="PANTHER" id="PTHR10277">
    <property type="entry name" value="HOMOCITRATE SYNTHASE-RELATED"/>
    <property type="match status" value="1"/>
</dbReference>
<dbReference type="Pfam" id="PF07836">
    <property type="entry name" value="DmpG_comm"/>
    <property type="match status" value="1"/>
</dbReference>
<dbReference type="Pfam" id="PF00682">
    <property type="entry name" value="HMGL-like"/>
    <property type="match status" value="1"/>
</dbReference>
<dbReference type="SUPFAM" id="SSF51569">
    <property type="entry name" value="Aldolase"/>
    <property type="match status" value="1"/>
</dbReference>
<dbReference type="SUPFAM" id="SSF89000">
    <property type="entry name" value="post-HMGL domain-like"/>
    <property type="match status" value="1"/>
</dbReference>
<dbReference type="PROSITE" id="PS50991">
    <property type="entry name" value="PYR_CT"/>
    <property type="match status" value="1"/>
</dbReference>
<sequence>MSTKDIFFNPIWDVRMTDTSLRDGSHHKRHQFTKDEVGAIVAALDTAGVPVIEVTHGDGLGGSSFNYGFSKTPEQELIKLAAETAKEAKIAFLMLPGVGTKEDIKEAQNNGGSICRIATHCTEADVSIQHFGLARELGLETVGFLMMSHTIPPEKLAQQARIMADAGCQCVYVVDSAGALVLEGVRDRVAALVAELGDDAQVGFHGHENLGLGVANSVEAVRAGAKQIDGSCRRFGAGAGNAPVEALIGVFDKIGVKTGIDFFDIADAAEEVVAPAMPAECLLDRNALIMGYSGVYSSFLKHAIRQSERYGVPAHQLLHRAGQRKLIGGQEDQLIDIALEIKREQDSGATAAH</sequence>
<organism>
    <name type="scientific">Mycobacterium sp. (strain MCS)</name>
    <dbReference type="NCBI Taxonomy" id="164756"/>
    <lineage>
        <taxon>Bacteria</taxon>
        <taxon>Bacillati</taxon>
        <taxon>Actinomycetota</taxon>
        <taxon>Actinomycetes</taxon>
        <taxon>Mycobacteriales</taxon>
        <taxon>Mycobacteriaceae</taxon>
        <taxon>Mycobacterium</taxon>
    </lineage>
</organism>
<reference key="1">
    <citation type="submission" date="2006-06" db="EMBL/GenBank/DDBJ databases">
        <title>Complete sequence of chromosome of Mycobacterium sp. MCS.</title>
        <authorList>
            <consortium name="US DOE Joint Genome Institute"/>
            <person name="Copeland A."/>
            <person name="Lucas S."/>
            <person name="Lapidus A."/>
            <person name="Barry K."/>
            <person name="Detter J.C."/>
            <person name="Glavina del Rio T."/>
            <person name="Hammon N."/>
            <person name="Israni S."/>
            <person name="Dalin E."/>
            <person name="Tice H."/>
            <person name="Pitluck S."/>
            <person name="Martinez M."/>
            <person name="Schmutz J."/>
            <person name="Larimer F."/>
            <person name="Land M."/>
            <person name="Hauser L."/>
            <person name="Kyrpides N."/>
            <person name="Kim E."/>
            <person name="Miller C.D."/>
            <person name="Hughes J.E."/>
            <person name="Anderson A.J."/>
            <person name="Sims R.C."/>
            <person name="Richardson P."/>
        </authorList>
    </citation>
    <scope>NUCLEOTIDE SEQUENCE [LARGE SCALE GENOMIC DNA]</scope>
    <source>
        <strain>MCS</strain>
    </source>
</reference>
<comment type="catalytic activity">
    <reaction evidence="1">
        <text>(S)-4-hydroxy-2-oxopentanoate = acetaldehyde + pyruvate</text>
        <dbReference type="Rhea" id="RHEA:22624"/>
        <dbReference type="ChEBI" id="CHEBI:15343"/>
        <dbReference type="ChEBI" id="CHEBI:15361"/>
        <dbReference type="ChEBI" id="CHEBI:73143"/>
        <dbReference type="EC" id="4.1.3.39"/>
    </reaction>
</comment>
<comment type="similarity">
    <text evidence="1">Belongs to the 4-hydroxy-2-oxovalerate aldolase family.</text>
</comment>
<feature type="chain" id="PRO_0000387861" description="4-hydroxy-2-oxovalerate aldolase 1">
    <location>
        <begin position="1"/>
        <end position="353"/>
    </location>
</feature>
<feature type="domain" description="Pyruvate carboxyltransferase" evidence="1">
    <location>
        <begin position="14"/>
        <end position="266"/>
    </location>
</feature>
<feature type="active site" description="Proton acceptor" evidence="1">
    <location>
        <position position="26"/>
    </location>
</feature>
<feature type="binding site" evidence="1">
    <location>
        <begin position="22"/>
        <end position="23"/>
    </location>
    <ligand>
        <name>substrate</name>
    </ligand>
</feature>
<feature type="binding site" evidence="1">
    <location>
        <position position="23"/>
    </location>
    <ligand>
        <name>Mn(2+)</name>
        <dbReference type="ChEBI" id="CHEBI:29035"/>
    </ligand>
</feature>
<feature type="binding site" evidence="1">
    <location>
        <position position="176"/>
    </location>
    <ligand>
        <name>substrate</name>
    </ligand>
</feature>
<feature type="binding site" evidence="1">
    <location>
        <position position="205"/>
    </location>
    <ligand>
        <name>Mn(2+)</name>
        <dbReference type="ChEBI" id="CHEBI:29035"/>
    </ligand>
</feature>
<feature type="binding site" evidence="1">
    <location>
        <position position="205"/>
    </location>
    <ligand>
        <name>substrate</name>
    </ligand>
</feature>
<feature type="binding site" evidence="1">
    <location>
        <position position="207"/>
    </location>
    <ligand>
        <name>Mn(2+)</name>
        <dbReference type="ChEBI" id="CHEBI:29035"/>
    </ligand>
</feature>
<feature type="binding site" evidence="1">
    <location>
        <position position="296"/>
    </location>
    <ligand>
        <name>substrate</name>
    </ligand>
</feature>
<feature type="site" description="Transition state stabilizer" evidence="1">
    <location>
        <position position="22"/>
    </location>
</feature>
<keyword id="KW-0058">Aromatic hydrocarbons catabolism</keyword>
<keyword id="KW-0456">Lyase</keyword>
<keyword id="KW-0464">Manganese</keyword>
<keyword id="KW-0479">Metal-binding</keyword>
<accession>Q1B2X1</accession>
<evidence type="ECO:0000255" key="1">
    <source>
        <dbReference type="HAMAP-Rule" id="MF_01656"/>
    </source>
</evidence>
<proteinExistence type="inferred from homology"/>
<name>HOA1_MYCSS</name>